<name>RL33_SYNE7</name>
<keyword id="KW-1185">Reference proteome</keyword>
<keyword id="KW-0687">Ribonucleoprotein</keyword>
<keyword id="KW-0689">Ribosomal protein</keyword>
<dbReference type="EMBL" id="CP000100">
    <property type="protein sequence ID" value="ABB57152.1"/>
    <property type="molecule type" value="Genomic_DNA"/>
</dbReference>
<dbReference type="RefSeq" id="WP_011242739.1">
    <property type="nucleotide sequence ID" value="NZ_JACJTX010000003.1"/>
</dbReference>
<dbReference type="STRING" id="1140.Synpcc7942_1122"/>
<dbReference type="PaxDb" id="1140-Synpcc7942_1122"/>
<dbReference type="GeneID" id="72429975"/>
<dbReference type="KEGG" id="syf:Synpcc7942_1122"/>
<dbReference type="eggNOG" id="COG0267">
    <property type="taxonomic scope" value="Bacteria"/>
</dbReference>
<dbReference type="HOGENOM" id="CLU_190949_3_0_3"/>
<dbReference type="OrthoDB" id="9801333at2"/>
<dbReference type="BioCyc" id="SYNEL:SYNPCC7942_1122-MONOMER"/>
<dbReference type="Proteomes" id="UP000889800">
    <property type="component" value="Chromosome"/>
</dbReference>
<dbReference type="GO" id="GO:0005737">
    <property type="term" value="C:cytoplasm"/>
    <property type="evidence" value="ECO:0007669"/>
    <property type="project" value="UniProtKB-ARBA"/>
</dbReference>
<dbReference type="GO" id="GO:1990904">
    <property type="term" value="C:ribonucleoprotein complex"/>
    <property type="evidence" value="ECO:0007669"/>
    <property type="project" value="UniProtKB-KW"/>
</dbReference>
<dbReference type="GO" id="GO:0005840">
    <property type="term" value="C:ribosome"/>
    <property type="evidence" value="ECO:0007669"/>
    <property type="project" value="UniProtKB-KW"/>
</dbReference>
<dbReference type="GO" id="GO:0003735">
    <property type="term" value="F:structural constituent of ribosome"/>
    <property type="evidence" value="ECO:0007669"/>
    <property type="project" value="InterPro"/>
</dbReference>
<dbReference type="GO" id="GO:0006412">
    <property type="term" value="P:translation"/>
    <property type="evidence" value="ECO:0007669"/>
    <property type="project" value="UniProtKB-UniRule"/>
</dbReference>
<dbReference type="Gene3D" id="2.20.28.120">
    <property type="entry name" value="Ribosomal protein L33"/>
    <property type="match status" value="1"/>
</dbReference>
<dbReference type="HAMAP" id="MF_00294">
    <property type="entry name" value="Ribosomal_bL33"/>
    <property type="match status" value="1"/>
</dbReference>
<dbReference type="InterPro" id="IPR001705">
    <property type="entry name" value="Ribosomal_bL33"/>
</dbReference>
<dbReference type="InterPro" id="IPR018264">
    <property type="entry name" value="Ribosomal_bL33_CS"/>
</dbReference>
<dbReference type="InterPro" id="IPR038584">
    <property type="entry name" value="Ribosomal_bL33_sf"/>
</dbReference>
<dbReference type="InterPro" id="IPR011332">
    <property type="entry name" value="Ribosomal_zn-bd"/>
</dbReference>
<dbReference type="NCBIfam" id="NF001764">
    <property type="entry name" value="PRK00504.1"/>
    <property type="match status" value="1"/>
</dbReference>
<dbReference type="NCBIfam" id="NF001860">
    <property type="entry name" value="PRK00595.1"/>
    <property type="match status" value="1"/>
</dbReference>
<dbReference type="NCBIfam" id="TIGR01023">
    <property type="entry name" value="rpmG_bact"/>
    <property type="match status" value="1"/>
</dbReference>
<dbReference type="PANTHER" id="PTHR43168">
    <property type="entry name" value="50S RIBOSOMAL PROTEIN L33, CHLOROPLASTIC"/>
    <property type="match status" value="1"/>
</dbReference>
<dbReference type="PANTHER" id="PTHR43168:SF2">
    <property type="entry name" value="LARGE RIBOSOMAL SUBUNIT PROTEIN BL33C"/>
    <property type="match status" value="1"/>
</dbReference>
<dbReference type="Pfam" id="PF00471">
    <property type="entry name" value="Ribosomal_L33"/>
    <property type="match status" value="1"/>
</dbReference>
<dbReference type="SUPFAM" id="SSF57829">
    <property type="entry name" value="Zn-binding ribosomal proteins"/>
    <property type="match status" value="1"/>
</dbReference>
<dbReference type="PROSITE" id="PS00582">
    <property type="entry name" value="RIBOSOMAL_L33"/>
    <property type="match status" value="1"/>
</dbReference>
<reference key="1">
    <citation type="submission" date="2005-08" db="EMBL/GenBank/DDBJ databases">
        <title>Complete sequence of chromosome 1 of Synechococcus elongatus PCC 7942.</title>
        <authorList>
            <consortium name="US DOE Joint Genome Institute"/>
            <person name="Copeland A."/>
            <person name="Lucas S."/>
            <person name="Lapidus A."/>
            <person name="Barry K."/>
            <person name="Detter J.C."/>
            <person name="Glavina T."/>
            <person name="Hammon N."/>
            <person name="Israni S."/>
            <person name="Pitluck S."/>
            <person name="Schmutz J."/>
            <person name="Larimer F."/>
            <person name="Land M."/>
            <person name="Kyrpides N."/>
            <person name="Lykidis A."/>
            <person name="Golden S."/>
            <person name="Richardson P."/>
        </authorList>
    </citation>
    <scope>NUCLEOTIDE SEQUENCE [LARGE SCALE GENOMIC DNA]</scope>
    <source>
        <strain>ATCC 33912 / PCC 7942 / FACHB-805</strain>
    </source>
</reference>
<evidence type="ECO:0000255" key="1">
    <source>
        <dbReference type="HAMAP-Rule" id="MF_00294"/>
    </source>
</evidence>
<evidence type="ECO:0000305" key="2"/>
<gene>
    <name evidence="1" type="primary">rpmG</name>
    <name evidence="1" type="synonym">rpl33</name>
    <name type="ordered locus">Synpcc7942_1122</name>
</gene>
<comment type="similarity">
    <text evidence="1">Belongs to the bacterial ribosomal protein bL33 family.</text>
</comment>
<sequence length="64" mass="7372">MAKAKGARIVITLECTECRSNTAKRSPGVSRYTTQKNRRNTTERLEIKKFCPHCNKHTAHKEIK</sequence>
<accession>Q31P67</accession>
<organism>
    <name type="scientific">Synechococcus elongatus (strain ATCC 33912 / PCC 7942 / FACHB-805)</name>
    <name type="common">Anacystis nidulans R2</name>
    <dbReference type="NCBI Taxonomy" id="1140"/>
    <lineage>
        <taxon>Bacteria</taxon>
        <taxon>Bacillati</taxon>
        <taxon>Cyanobacteriota</taxon>
        <taxon>Cyanophyceae</taxon>
        <taxon>Synechococcales</taxon>
        <taxon>Synechococcaceae</taxon>
        <taxon>Synechococcus</taxon>
    </lineage>
</organism>
<proteinExistence type="inferred from homology"/>
<protein>
    <recommendedName>
        <fullName evidence="1">Large ribosomal subunit protein bL33</fullName>
    </recommendedName>
    <alternativeName>
        <fullName evidence="2">50S ribosomal protein L33</fullName>
    </alternativeName>
</protein>
<feature type="chain" id="PRO_1000004200" description="Large ribosomal subunit protein bL33">
    <location>
        <begin position="1"/>
        <end position="64"/>
    </location>
</feature>